<comment type="similarity">
    <text evidence="1">Belongs to the UPF0102 family.</text>
</comment>
<accession>A2SMD0</accession>
<organism>
    <name type="scientific">Methylibium petroleiphilum (strain ATCC BAA-1232 / LMG 22953 / PM1)</name>
    <dbReference type="NCBI Taxonomy" id="420662"/>
    <lineage>
        <taxon>Bacteria</taxon>
        <taxon>Pseudomonadati</taxon>
        <taxon>Pseudomonadota</taxon>
        <taxon>Betaproteobacteria</taxon>
        <taxon>Burkholderiales</taxon>
        <taxon>Sphaerotilaceae</taxon>
        <taxon>Methylibium</taxon>
    </lineage>
</organism>
<sequence length="122" mass="13315">MVTTKAVGDGGEDRALAYLLRAGLKLVERNYRVAGGPRVRGGEIDLVLRDRDGTLVFVEVRTRATRSHGGAAATVSGVKQQRIVRAARHYLMRFASPPPCRFDVVAIEGEHIAWLRAAFDAS</sequence>
<name>Y3766_METPP</name>
<protein>
    <recommendedName>
        <fullName evidence="1">UPF0102 protein Mpe_A3766</fullName>
    </recommendedName>
</protein>
<proteinExistence type="inferred from homology"/>
<keyword id="KW-1185">Reference proteome</keyword>
<dbReference type="EMBL" id="CP000555">
    <property type="protein sequence ID" value="ABM96719.1"/>
    <property type="molecule type" value="Genomic_DNA"/>
</dbReference>
<dbReference type="RefSeq" id="WP_011831339.1">
    <property type="nucleotide sequence ID" value="NC_008825.1"/>
</dbReference>
<dbReference type="SMR" id="A2SMD0"/>
<dbReference type="STRING" id="420662.Mpe_A3766"/>
<dbReference type="KEGG" id="mpt:Mpe_A3766"/>
<dbReference type="eggNOG" id="COG0792">
    <property type="taxonomic scope" value="Bacteria"/>
</dbReference>
<dbReference type="HOGENOM" id="CLU_115353_1_0_4"/>
<dbReference type="Proteomes" id="UP000000366">
    <property type="component" value="Chromosome"/>
</dbReference>
<dbReference type="GO" id="GO:0003676">
    <property type="term" value="F:nucleic acid binding"/>
    <property type="evidence" value="ECO:0007669"/>
    <property type="project" value="InterPro"/>
</dbReference>
<dbReference type="Gene3D" id="3.40.1350.10">
    <property type="match status" value="1"/>
</dbReference>
<dbReference type="HAMAP" id="MF_00048">
    <property type="entry name" value="UPF0102"/>
    <property type="match status" value="1"/>
</dbReference>
<dbReference type="InterPro" id="IPR011335">
    <property type="entry name" value="Restrct_endonuc-II-like"/>
</dbReference>
<dbReference type="InterPro" id="IPR011856">
    <property type="entry name" value="tRNA_endonuc-like_dom_sf"/>
</dbReference>
<dbReference type="InterPro" id="IPR003509">
    <property type="entry name" value="UPF0102_YraN-like"/>
</dbReference>
<dbReference type="NCBIfam" id="NF009150">
    <property type="entry name" value="PRK12497.1-3"/>
    <property type="match status" value="1"/>
</dbReference>
<dbReference type="NCBIfam" id="TIGR00252">
    <property type="entry name" value="YraN family protein"/>
    <property type="match status" value="1"/>
</dbReference>
<dbReference type="PANTHER" id="PTHR34039">
    <property type="entry name" value="UPF0102 PROTEIN YRAN"/>
    <property type="match status" value="1"/>
</dbReference>
<dbReference type="PANTHER" id="PTHR34039:SF1">
    <property type="entry name" value="UPF0102 PROTEIN YRAN"/>
    <property type="match status" value="1"/>
</dbReference>
<dbReference type="Pfam" id="PF02021">
    <property type="entry name" value="UPF0102"/>
    <property type="match status" value="1"/>
</dbReference>
<dbReference type="SUPFAM" id="SSF52980">
    <property type="entry name" value="Restriction endonuclease-like"/>
    <property type="match status" value="1"/>
</dbReference>
<evidence type="ECO:0000255" key="1">
    <source>
        <dbReference type="HAMAP-Rule" id="MF_00048"/>
    </source>
</evidence>
<reference key="1">
    <citation type="journal article" date="2007" name="J. Bacteriol.">
        <title>Whole-genome analysis of the methyl tert-butyl ether-degrading beta-proteobacterium Methylibium petroleiphilum PM1.</title>
        <authorList>
            <person name="Kane S.R."/>
            <person name="Chakicherla A.Y."/>
            <person name="Chain P.S.G."/>
            <person name="Schmidt R."/>
            <person name="Shin M.W."/>
            <person name="Legler T.C."/>
            <person name="Scow K.M."/>
            <person name="Larimer F.W."/>
            <person name="Lucas S.M."/>
            <person name="Richardson P.M."/>
            <person name="Hristova K.R."/>
        </authorList>
    </citation>
    <scope>NUCLEOTIDE SEQUENCE [LARGE SCALE GENOMIC DNA]</scope>
    <source>
        <strain>ATCC BAA-1232 / LMG 22953 / PM1</strain>
    </source>
</reference>
<gene>
    <name type="ordered locus">Mpe_A3766</name>
</gene>
<feature type="chain" id="PRO_1000009232" description="UPF0102 protein Mpe_A3766">
    <location>
        <begin position="1"/>
        <end position="122"/>
    </location>
</feature>